<name>RIN1_ARATH</name>
<dbReference type="EC" id="3.6.4.12"/>
<dbReference type="EMBL" id="AB007651">
    <property type="protein sequence ID" value="BAB08331.1"/>
    <property type="molecule type" value="Genomic_DNA"/>
</dbReference>
<dbReference type="EMBL" id="CP002688">
    <property type="protein sequence ID" value="AED93012.1"/>
    <property type="molecule type" value="Genomic_DNA"/>
</dbReference>
<dbReference type="EMBL" id="BT000923">
    <property type="protein sequence ID" value="AAN41323.1"/>
    <property type="molecule type" value="mRNA"/>
</dbReference>
<dbReference type="EMBL" id="AY084606">
    <property type="protein sequence ID" value="AAM61170.1"/>
    <property type="molecule type" value="mRNA"/>
</dbReference>
<dbReference type="RefSeq" id="NP_197625.1">
    <property type="nucleotide sequence ID" value="NM_122138.3"/>
</dbReference>
<dbReference type="PDB" id="9EQ2">
    <property type="method" value="EM"/>
    <property type="resolution" value="3.68 A"/>
    <property type="chains" value="A/B/C=1-458"/>
</dbReference>
<dbReference type="PDBsum" id="9EQ2"/>
<dbReference type="EMDB" id="EMD-19894"/>
<dbReference type="SMR" id="Q9FMR9"/>
<dbReference type="BioGRID" id="17568">
    <property type="interactions" value="101"/>
</dbReference>
<dbReference type="FunCoup" id="Q9FMR9">
    <property type="interactions" value="4632"/>
</dbReference>
<dbReference type="IntAct" id="Q9FMR9">
    <property type="interactions" value="1"/>
</dbReference>
<dbReference type="STRING" id="3702.Q9FMR9"/>
<dbReference type="PaxDb" id="3702-AT5G22330.1"/>
<dbReference type="ProteomicsDB" id="237004"/>
<dbReference type="EnsemblPlants" id="AT5G22330.1">
    <property type="protein sequence ID" value="AT5G22330.1"/>
    <property type="gene ID" value="AT5G22330"/>
</dbReference>
<dbReference type="GeneID" id="832293"/>
<dbReference type="Gramene" id="AT5G22330.1">
    <property type="protein sequence ID" value="AT5G22330.1"/>
    <property type="gene ID" value="AT5G22330"/>
</dbReference>
<dbReference type="KEGG" id="ath:AT5G22330"/>
<dbReference type="Araport" id="AT5G22330"/>
<dbReference type="TAIR" id="AT5G22330">
    <property type="gene designation" value="RIN1"/>
</dbReference>
<dbReference type="eggNOG" id="KOG1942">
    <property type="taxonomic scope" value="Eukaryota"/>
</dbReference>
<dbReference type="HOGENOM" id="CLU_028311_1_1_1"/>
<dbReference type="InParanoid" id="Q9FMR9"/>
<dbReference type="OMA" id="RTLPYNK"/>
<dbReference type="OrthoDB" id="1057676at2759"/>
<dbReference type="PhylomeDB" id="Q9FMR9"/>
<dbReference type="CD-CODE" id="4299E36E">
    <property type="entry name" value="Nucleolus"/>
</dbReference>
<dbReference type="PRO" id="PR:Q9FMR9"/>
<dbReference type="Proteomes" id="UP000006548">
    <property type="component" value="Chromosome 5"/>
</dbReference>
<dbReference type="ExpressionAtlas" id="Q9FMR9">
    <property type="expression patterns" value="baseline and differential"/>
</dbReference>
<dbReference type="GO" id="GO:0005730">
    <property type="term" value="C:nucleolus"/>
    <property type="evidence" value="ECO:0007005"/>
    <property type="project" value="TAIR"/>
</dbReference>
<dbReference type="GO" id="GO:0005634">
    <property type="term" value="C:nucleus"/>
    <property type="evidence" value="ECO:0007005"/>
    <property type="project" value="TAIR"/>
</dbReference>
<dbReference type="GO" id="GO:0000812">
    <property type="term" value="C:Swr1 complex"/>
    <property type="evidence" value="ECO:0000314"/>
    <property type="project" value="TAIR"/>
</dbReference>
<dbReference type="GO" id="GO:0005524">
    <property type="term" value="F:ATP binding"/>
    <property type="evidence" value="ECO:0007669"/>
    <property type="project" value="UniProtKB-KW"/>
</dbReference>
<dbReference type="GO" id="GO:0016887">
    <property type="term" value="F:ATP hydrolysis activity"/>
    <property type="evidence" value="ECO:0007669"/>
    <property type="project" value="InterPro"/>
</dbReference>
<dbReference type="GO" id="GO:0008094">
    <property type="term" value="F:ATP-dependent activity, acting on DNA"/>
    <property type="evidence" value="ECO:0007669"/>
    <property type="project" value="InterPro"/>
</dbReference>
<dbReference type="GO" id="GO:0004386">
    <property type="term" value="F:helicase activity"/>
    <property type="evidence" value="ECO:0007669"/>
    <property type="project" value="UniProtKB-KW"/>
</dbReference>
<dbReference type="GO" id="GO:0030154">
    <property type="term" value="P:cell differentiation"/>
    <property type="evidence" value="ECO:0007669"/>
    <property type="project" value="UniProtKB-KW"/>
</dbReference>
<dbReference type="GO" id="GO:0009908">
    <property type="term" value="P:flower development"/>
    <property type="evidence" value="ECO:0007669"/>
    <property type="project" value="UniProtKB-KW"/>
</dbReference>
<dbReference type="GO" id="GO:0048507">
    <property type="term" value="P:meristem development"/>
    <property type="evidence" value="ECO:0000315"/>
    <property type="project" value="TAIR"/>
</dbReference>
<dbReference type="GO" id="GO:1900150">
    <property type="term" value="P:regulation of defense response to fungus"/>
    <property type="evidence" value="ECO:0000315"/>
    <property type="project" value="TAIR"/>
</dbReference>
<dbReference type="FunFam" id="1.10.8.60:FF:000010">
    <property type="entry name" value="RuvB-like helicase"/>
    <property type="match status" value="1"/>
</dbReference>
<dbReference type="FunFam" id="2.40.50.360:FF:000001">
    <property type="entry name" value="RuvB-like helicase"/>
    <property type="match status" value="1"/>
</dbReference>
<dbReference type="Gene3D" id="1.10.8.60">
    <property type="match status" value="1"/>
</dbReference>
<dbReference type="Gene3D" id="3.40.50.300">
    <property type="entry name" value="P-loop containing nucleotide triphosphate hydrolases"/>
    <property type="match status" value="1"/>
</dbReference>
<dbReference type="Gene3D" id="2.40.50.360">
    <property type="entry name" value="RuvB-like helicase, domain II"/>
    <property type="match status" value="1"/>
</dbReference>
<dbReference type="InterPro" id="IPR003593">
    <property type="entry name" value="AAA+_ATPase"/>
</dbReference>
<dbReference type="InterPro" id="IPR027417">
    <property type="entry name" value="P-loop_NTPase"/>
</dbReference>
<dbReference type="InterPro" id="IPR027238">
    <property type="entry name" value="RuvB-like"/>
</dbReference>
<dbReference type="InterPro" id="IPR041048">
    <property type="entry name" value="RuvB-like_C"/>
</dbReference>
<dbReference type="InterPro" id="IPR042487">
    <property type="entry name" value="RuvBL1/2_DNA/RNA_bd_dom"/>
</dbReference>
<dbReference type="InterPro" id="IPR010339">
    <property type="entry name" value="TIP49_P-loop"/>
</dbReference>
<dbReference type="PANTHER" id="PTHR11093">
    <property type="entry name" value="RUVB-RELATED REPTIN AND PONTIN"/>
    <property type="match status" value="1"/>
</dbReference>
<dbReference type="Pfam" id="PF06068">
    <property type="entry name" value="TIP49"/>
    <property type="match status" value="1"/>
</dbReference>
<dbReference type="Pfam" id="PF17856">
    <property type="entry name" value="TIP49_C"/>
    <property type="match status" value="1"/>
</dbReference>
<dbReference type="SMART" id="SM00382">
    <property type="entry name" value="AAA"/>
    <property type="match status" value="1"/>
</dbReference>
<dbReference type="SUPFAM" id="SSF52540">
    <property type="entry name" value="P-loop containing nucleoside triphosphate hydrolases"/>
    <property type="match status" value="1"/>
</dbReference>
<organism>
    <name type="scientific">Arabidopsis thaliana</name>
    <name type="common">Mouse-ear cress</name>
    <dbReference type="NCBI Taxonomy" id="3702"/>
    <lineage>
        <taxon>Eukaryota</taxon>
        <taxon>Viridiplantae</taxon>
        <taxon>Streptophyta</taxon>
        <taxon>Embryophyta</taxon>
        <taxon>Tracheophyta</taxon>
        <taxon>Spermatophyta</taxon>
        <taxon>Magnoliopsida</taxon>
        <taxon>eudicotyledons</taxon>
        <taxon>Gunneridae</taxon>
        <taxon>Pentapetalae</taxon>
        <taxon>rosids</taxon>
        <taxon>malvids</taxon>
        <taxon>Brassicales</taxon>
        <taxon>Brassicaceae</taxon>
        <taxon>Camelineae</taxon>
        <taxon>Arabidopsis</taxon>
    </lineage>
</organism>
<comment type="function">
    <text evidence="1">Proposed core component of the chromatin remodeling INO80 complex which is involved in transcriptional regulation, DNA replication and probably DNA repair. Component of the NuA4 histone acetyltransferase complex which is involved in transcriptional activation of select genes principally by acetylation of nucleosomal histones H4 and H2A. Has single-stranded DNA-stimulated ATPase and ATP-dependent DNA helicase (3' to 5') activity suggesting a role in nuclear processes such as recombination and transcription (By similarity).</text>
</comment>
<comment type="catalytic activity">
    <reaction>
        <text>ATP + H2O = ADP + phosphate + H(+)</text>
        <dbReference type="Rhea" id="RHEA:13065"/>
        <dbReference type="ChEBI" id="CHEBI:15377"/>
        <dbReference type="ChEBI" id="CHEBI:15378"/>
        <dbReference type="ChEBI" id="CHEBI:30616"/>
        <dbReference type="ChEBI" id="CHEBI:43474"/>
        <dbReference type="ChEBI" id="CHEBI:456216"/>
        <dbReference type="EC" id="3.6.4.12"/>
    </reaction>
</comment>
<comment type="subunit">
    <text evidence="2 3">Interacts with FRI, and with FLX and FES1, two component of the transcription activator complex FRI-C. Interacts with the disease resistance genes RPM1 and RPP5.</text>
</comment>
<comment type="subcellular location">
    <subcellularLocation>
        <location evidence="1">Nucleus</location>
    </subcellularLocation>
</comment>
<comment type="disruption phenotype">
    <text evidence="2">Gametophyte lethality.</text>
</comment>
<comment type="similarity">
    <text evidence="4">Belongs to the RuvB family.</text>
</comment>
<accession>Q9FMR9</accession>
<gene>
    <name type="primary">RIN1</name>
    <name type="synonym">RVB1</name>
    <name type="synonym">TIP49a</name>
    <name type="ordered locus">At5g22330</name>
</gene>
<evidence type="ECO:0000250" key="1"/>
<evidence type="ECO:0000269" key="2">
    <source>
    </source>
</evidence>
<evidence type="ECO:0000269" key="3">
    <source>
    </source>
</evidence>
<evidence type="ECO:0000305" key="4"/>
<reference key="1">
    <citation type="journal article" date="1997" name="DNA Res.">
        <title>Structural analysis of Arabidopsis thaliana chromosome 5. III. Sequence features of the regions of 1,191,918 bp covered by seventeen physically assigned P1 clones.</title>
        <authorList>
            <person name="Nakamura Y."/>
            <person name="Sato S."/>
            <person name="Kaneko T."/>
            <person name="Kotani H."/>
            <person name="Asamizu E."/>
            <person name="Miyajima N."/>
            <person name="Tabata S."/>
        </authorList>
    </citation>
    <scope>NUCLEOTIDE SEQUENCE [LARGE SCALE GENOMIC DNA]</scope>
    <source>
        <strain>cv. Columbia</strain>
    </source>
</reference>
<reference key="2">
    <citation type="journal article" date="2017" name="Plant J.">
        <title>Araport11: a complete reannotation of the Arabidopsis thaliana reference genome.</title>
        <authorList>
            <person name="Cheng C.Y."/>
            <person name="Krishnakumar V."/>
            <person name="Chan A.P."/>
            <person name="Thibaud-Nissen F."/>
            <person name="Schobel S."/>
            <person name="Town C.D."/>
        </authorList>
    </citation>
    <scope>GENOME REANNOTATION</scope>
    <source>
        <strain>cv. Columbia</strain>
    </source>
</reference>
<reference key="3">
    <citation type="journal article" date="2003" name="Science">
        <title>Empirical analysis of transcriptional activity in the Arabidopsis genome.</title>
        <authorList>
            <person name="Yamada K."/>
            <person name="Lim J."/>
            <person name="Dale J.M."/>
            <person name="Chen H."/>
            <person name="Shinn P."/>
            <person name="Palm C.J."/>
            <person name="Southwick A.M."/>
            <person name="Wu H.C."/>
            <person name="Kim C.J."/>
            <person name="Nguyen M."/>
            <person name="Pham P.K."/>
            <person name="Cheuk R.F."/>
            <person name="Karlin-Newmann G."/>
            <person name="Liu S.X."/>
            <person name="Lam B."/>
            <person name="Sakano H."/>
            <person name="Wu T."/>
            <person name="Yu G."/>
            <person name="Miranda M."/>
            <person name="Quach H.L."/>
            <person name="Tripp M."/>
            <person name="Chang C.H."/>
            <person name="Lee J.M."/>
            <person name="Toriumi M.J."/>
            <person name="Chan M.M."/>
            <person name="Tang C.C."/>
            <person name="Onodera C.S."/>
            <person name="Deng J.M."/>
            <person name="Akiyama K."/>
            <person name="Ansari Y."/>
            <person name="Arakawa T."/>
            <person name="Banh J."/>
            <person name="Banno F."/>
            <person name="Bowser L."/>
            <person name="Brooks S.Y."/>
            <person name="Carninci P."/>
            <person name="Chao Q."/>
            <person name="Choy N."/>
            <person name="Enju A."/>
            <person name="Goldsmith A.D."/>
            <person name="Gurjal M."/>
            <person name="Hansen N.F."/>
            <person name="Hayashizaki Y."/>
            <person name="Johnson-Hopson C."/>
            <person name="Hsuan V.W."/>
            <person name="Iida K."/>
            <person name="Karnes M."/>
            <person name="Khan S."/>
            <person name="Koesema E."/>
            <person name="Ishida J."/>
            <person name="Jiang P.X."/>
            <person name="Jones T."/>
            <person name="Kawai J."/>
            <person name="Kamiya A."/>
            <person name="Meyers C."/>
            <person name="Nakajima M."/>
            <person name="Narusaka M."/>
            <person name="Seki M."/>
            <person name="Sakurai T."/>
            <person name="Satou M."/>
            <person name="Tamse R."/>
            <person name="Vaysberg M."/>
            <person name="Wallender E.K."/>
            <person name="Wong C."/>
            <person name="Yamamura Y."/>
            <person name="Yuan S."/>
            <person name="Shinozaki K."/>
            <person name="Davis R.W."/>
            <person name="Theologis A."/>
            <person name="Ecker J.R."/>
        </authorList>
    </citation>
    <scope>NUCLEOTIDE SEQUENCE [LARGE SCALE MRNA]</scope>
    <source>
        <strain>cv. Columbia</strain>
    </source>
</reference>
<reference key="4">
    <citation type="submission" date="2002-03" db="EMBL/GenBank/DDBJ databases">
        <title>Full-length cDNA from Arabidopsis thaliana.</title>
        <authorList>
            <person name="Brover V.V."/>
            <person name="Troukhan M.E."/>
            <person name="Alexandrov N.A."/>
            <person name="Lu Y.-P."/>
            <person name="Flavell R.B."/>
            <person name="Feldmann K.A."/>
        </authorList>
    </citation>
    <scope>NUCLEOTIDE SEQUENCE [LARGE SCALE MRNA]</scope>
</reference>
<reference key="5">
    <citation type="journal article" date="2002" name="Dev. Cell">
        <title>An evolutionarily conserved mediator of plant disease resistance gene function is required for normal Arabidopsis development.</title>
        <authorList>
            <person name="Holt B.F. III"/>
            <person name="Boyes D.C."/>
            <person name="Ellerstroem M."/>
            <person name="Siefers N."/>
            <person name="Wiig A."/>
            <person name="Kauffman S."/>
            <person name="Grant M.R."/>
            <person name="Dangl J.L."/>
        </authorList>
    </citation>
    <scope>INTERACTION WITH RPM1 AND RPP5</scope>
    <scope>DISRUPTION PHENOTYPE</scope>
</reference>
<reference key="6">
    <citation type="journal article" date="2011" name="Plant Cell">
        <title>The FRIGIDA complex activates transcription of FLC, a strong flowering repressor in Arabidopsis, by recruiting chromatin modification factors.</title>
        <authorList>
            <person name="Choi K."/>
            <person name="Kim J."/>
            <person name="Hwang H.J."/>
            <person name="Kim S."/>
            <person name="Park C."/>
            <person name="Kim S.Y."/>
            <person name="Lee I."/>
        </authorList>
    </citation>
    <scope>INTERACTION WITH FLX; FES1 AND FRI</scope>
</reference>
<protein>
    <recommendedName>
        <fullName>RuvB-like protein 1</fullName>
        <ecNumber>3.6.4.12</ecNumber>
    </recommendedName>
    <alternativeName>
        <fullName>49 kDa TATA box-binding protein-interacting protein homolog</fullName>
        <shortName>AtTIP49a</shortName>
    </alternativeName>
    <alternativeName>
        <fullName>Ruv DNA-helicase-like protein</fullName>
    </alternativeName>
</protein>
<keyword id="KW-0002">3D-structure</keyword>
<keyword id="KW-0067">ATP-binding</keyword>
<keyword id="KW-0217">Developmental protein</keyword>
<keyword id="KW-0221">Differentiation</keyword>
<keyword id="KW-0287">Flowering</keyword>
<keyword id="KW-0347">Helicase</keyword>
<keyword id="KW-0378">Hydrolase</keyword>
<keyword id="KW-0547">Nucleotide-binding</keyword>
<keyword id="KW-0539">Nucleus</keyword>
<keyword id="KW-1185">Reference proteome</keyword>
<proteinExistence type="evidence at protein level"/>
<feature type="chain" id="PRO_0000423730" description="RuvB-like protein 1">
    <location>
        <begin position="1"/>
        <end position="458"/>
    </location>
</feature>
<feature type="binding site" evidence="1">
    <location>
        <begin position="73"/>
        <end position="80"/>
    </location>
    <ligand>
        <name>ATP</name>
        <dbReference type="ChEBI" id="CHEBI:30616"/>
    </ligand>
</feature>
<sequence length="458" mass="50323">MEKVKIEEIQSTAKKQRIATHTHIKGLGLEPTGIPIKLAAGFVGQLEAREAAGLVVDMIKQKKMAGKALLLAGPPGTGKTALALGISQELGSKVPFCPMVGSEVYSSEVKKTEVLMENFRRAIGLRIKETKEVYEGEVTELSPEETESLTGGYGKSISHVVITLKTVKGTKHLKLDPTIYDALIKEKVAVGDVIYIEANSGAVKRVGRSDAFATEFDLEAEEYVPLPKGEVHKKKEIVQDVTLQDLDAANARPQGGQDILSLMGQMMKPRKTEITDKLRQEINKVVNRYIDEGVAELVPGVLFIDEVHMLDMECFSYLNRALESSLSPIVIFATNRGVCNVRGTDMPSPHGVPIDLLDRLVIIRTQIYDPSEMIQIIAIRAQVEELTVDEECLVLLGEIGQRTSLRHAVQLLSPASIVAKMNGRDNICKADIEEVTSLYLDAKSSAKLLHEQQEKYIS</sequence>